<proteinExistence type="inferred from homology"/>
<protein>
    <recommendedName>
        <fullName evidence="1">Small ribosomal subunit protein uS7</fullName>
    </recommendedName>
    <alternativeName>
        <fullName evidence="2">30S ribosomal protein S7</fullName>
    </alternativeName>
</protein>
<organism>
    <name type="scientific">Xanthomonas campestris pv. campestris (strain ATCC 33913 / DSM 3586 / NCPPB 528 / LMG 568 / P 25)</name>
    <dbReference type="NCBI Taxonomy" id="190485"/>
    <lineage>
        <taxon>Bacteria</taxon>
        <taxon>Pseudomonadati</taxon>
        <taxon>Pseudomonadota</taxon>
        <taxon>Gammaproteobacteria</taxon>
        <taxon>Lysobacterales</taxon>
        <taxon>Lysobacteraceae</taxon>
        <taxon>Xanthomonas</taxon>
    </lineage>
</organism>
<comment type="function">
    <text evidence="1">One of the primary rRNA binding proteins, it binds directly to 16S rRNA where it nucleates assembly of the head domain of the 30S subunit. Is located at the subunit interface close to the decoding center, probably blocks exit of the E-site tRNA.</text>
</comment>
<comment type="subunit">
    <text evidence="1">Part of the 30S ribosomal subunit. Contacts proteins S9 and S11.</text>
</comment>
<comment type="similarity">
    <text evidence="1">Belongs to the universal ribosomal protein uS7 family.</text>
</comment>
<reference key="1">
    <citation type="journal article" date="2002" name="Nature">
        <title>Comparison of the genomes of two Xanthomonas pathogens with differing host specificities.</title>
        <authorList>
            <person name="da Silva A.C.R."/>
            <person name="Ferro J.A."/>
            <person name="Reinach F.C."/>
            <person name="Farah C.S."/>
            <person name="Furlan L.R."/>
            <person name="Quaggio R.B."/>
            <person name="Monteiro-Vitorello C.B."/>
            <person name="Van Sluys M.A."/>
            <person name="Almeida N.F. Jr."/>
            <person name="Alves L.M.C."/>
            <person name="do Amaral A.M."/>
            <person name="Bertolini M.C."/>
            <person name="Camargo L.E.A."/>
            <person name="Camarotte G."/>
            <person name="Cannavan F."/>
            <person name="Cardozo J."/>
            <person name="Chambergo F."/>
            <person name="Ciapina L.P."/>
            <person name="Cicarelli R.M.B."/>
            <person name="Coutinho L.L."/>
            <person name="Cursino-Santos J.R."/>
            <person name="El-Dorry H."/>
            <person name="Faria J.B."/>
            <person name="Ferreira A.J.S."/>
            <person name="Ferreira R.C.C."/>
            <person name="Ferro M.I.T."/>
            <person name="Formighieri E.F."/>
            <person name="Franco M.C."/>
            <person name="Greggio C.C."/>
            <person name="Gruber A."/>
            <person name="Katsuyama A.M."/>
            <person name="Kishi L.T."/>
            <person name="Leite R.P."/>
            <person name="Lemos E.G.M."/>
            <person name="Lemos M.V.F."/>
            <person name="Locali E.C."/>
            <person name="Machado M.A."/>
            <person name="Madeira A.M.B.N."/>
            <person name="Martinez-Rossi N.M."/>
            <person name="Martins E.C."/>
            <person name="Meidanis J."/>
            <person name="Menck C.F.M."/>
            <person name="Miyaki C.Y."/>
            <person name="Moon D.H."/>
            <person name="Moreira L.M."/>
            <person name="Novo M.T.M."/>
            <person name="Okura V.K."/>
            <person name="Oliveira M.C."/>
            <person name="Oliveira V.R."/>
            <person name="Pereira H.A."/>
            <person name="Rossi A."/>
            <person name="Sena J.A.D."/>
            <person name="Silva C."/>
            <person name="de Souza R.F."/>
            <person name="Spinola L.A.F."/>
            <person name="Takita M.A."/>
            <person name="Tamura R.E."/>
            <person name="Teixeira E.C."/>
            <person name="Tezza R.I.D."/>
            <person name="Trindade dos Santos M."/>
            <person name="Truffi D."/>
            <person name="Tsai S.M."/>
            <person name="White F.F."/>
            <person name="Setubal J.C."/>
            <person name="Kitajima J.P."/>
        </authorList>
    </citation>
    <scope>NUCLEOTIDE SEQUENCE [LARGE SCALE GENOMIC DNA]</scope>
    <source>
        <strain>ATCC 33913 / DSM 3586 / NCPPB 528 / LMG 568 / P 25</strain>
    </source>
</reference>
<feature type="chain" id="PRO_0000124385" description="Small ribosomal subunit protein uS7">
    <location>
        <begin position="1"/>
        <end position="155"/>
    </location>
</feature>
<gene>
    <name evidence="1" type="primary">rpsG</name>
    <name type="ordered locus">XCC0891</name>
</gene>
<name>RS7_XANCP</name>
<evidence type="ECO:0000255" key="1">
    <source>
        <dbReference type="HAMAP-Rule" id="MF_00480"/>
    </source>
</evidence>
<evidence type="ECO:0000305" key="2"/>
<keyword id="KW-1185">Reference proteome</keyword>
<keyword id="KW-0687">Ribonucleoprotein</keyword>
<keyword id="KW-0689">Ribosomal protein</keyword>
<keyword id="KW-0694">RNA-binding</keyword>
<keyword id="KW-0699">rRNA-binding</keyword>
<keyword id="KW-0820">tRNA-binding</keyword>
<accession>Q8PC53</accession>
<sequence length="155" mass="17260">MSRKGSTPQRTVLPDPKHGSETIARFINMVMQSGKKSVAEKIVYGAMDVIGEKNPNAVELVQKALDNVAPAVEVKSRRVGGATYQVPVEVRSSRRMALAMRWLIDSARKRGENTMPRKLAAELLDASESRGGAIKKREETHRMAEANKAFAHYRW</sequence>
<dbReference type="EMBL" id="AE008922">
    <property type="protein sequence ID" value="AAM40201.1"/>
    <property type="molecule type" value="Genomic_DNA"/>
</dbReference>
<dbReference type="RefSeq" id="NP_636277.1">
    <property type="nucleotide sequence ID" value="NC_003902.1"/>
</dbReference>
<dbReference type="RefSeq" id="WP_005993356.1">
    <property type="nucleotide sequence ID" value="NC_003902.1"/>
</dbReference>
<dbReference type="SMR" id="Q8PC53"/>
<dbReference type="STRING" id="190485.XCC0891"/>
<dbReference type="EnsemblBacteria" id="AAM40201">
    <property type="protein sequence ID" value="AAM40201"/>
    <property type="gene ID" value="XCC0891"/>
</dbReference>
<dbReference type="GeneID" id="97210500"/>
<dbReference type="KEGG" id="xcc:XCC0891"/>
<dbReference type="PATRIC" id="fig|190485.4.peg.962"/>
<dbReference type="eggNOG" id="COG0049">
    <property type="taxonomic scope" value="Bacteria"/>
</dbReference>
<dbReference type="HOGENOM" id="CLU_072226_1_1_6"/>
<dbReference type="OrthoDB" id="9807653at2"/>
<dbReference type="Proteomes" id="UP000001010">
    <property type="component" value="Chromosome"/>
</dbReference>
<dbReference type="GO" id="GO:0022627">
    <property type="term" value="C:cytosolic small ribosomal subunit"/>
    <property type="evidence" value="ECO:0000318"/>
    <property type="project" value="GO_Central"/>
</dbReference>
<dbReference type="GO" id="GO:0005840">
    <property type="term" value="C:ribosome"/>
    <property type="evidence" value="ECO:0000318"/>
    <property type="project" value="GO_Central"/>
</dbReference>
<dbReference type="GO" id="GO:0003729">
    <property type="term" value="F:mRNA binding"/>
    <property type="evidence" value="ECO:0000318"/>
    <property type="project" value="GO_Central"/>
</dbReference>
<dbReference type="GO" id="GO:0019843">
    <property type="term" value="F:rRNA binding"/>
    <property type="evidence" value="ECO:0000318"/>
    <property type="project" value="GO_Central"/>
</dbReference>
<dbReference type="GO" id="GO:0003735">
    <property type="term" value="F:structural constituent of ribosome"/>
    <property type="evidence" value="ECO:0000318"/>
    <property type="project" value="GO_Central"/>
</dbReference>
<dbReference type="GO" id="GO:0000049">
    <property type="term" value="F:tRNA binding"/>
    <property type="evidence" value="ECO:0007669"/>
    <property type="project" value="UniProtKB-UniRule"/>
</dbReference>
<dbReference type="GO" id="GO:0000028">
    <property type="term" value="P:ribosomal small subunit assembly"/>
    <property type="evidence" value="ECO:0000318"/>
    <property type="project" value="GO_Central"/>
</dbReference>
<dbReference type="GO" id="GO:0006412">
    <property type="term" value="P:translation"/>
    <property type="evidence" value="ECO:0000318"/>
    <property type="project" value="GO_Central"/>
</dbReference>
<dbReference type="CDD" id="cd14869">
    <property type="entry name" value="uS7_Bacteria"/>
    <property type="match status" value="1"/>
</dbReference>
<dbReference type="FunFam" id="1.10.455.10:FF:000001">
    <property type="entry name" value="30S ribosomal protein S7"/>
    <property type="match status" value="1"/>
</dbReference>
<dbReference type="Gene3D" id="1.10.455.10">
    <property type="entry name" value="Ribosomal protein S7 domain"/>
    <property type="match status" value="1"/>
</dbReference>
<dbReference type="HAMAP" id="MF_00480_B">
    <property type="entry name" value="Ribosomal_uS7_B"/>
    <property type="match status" value="1"/>
</dbReference>
<dbReference type="InterPro" id="IPR000235">
    <property type="entry name" value="Ribosomal_uS7"/>
</dbReference>
<dbReference type="InterPro" id="IPR005717">
    <property type="entry name" value="Ribosomal_uS7_bac/org-type"/>
</dbReference>
<dbReference type="InterPro" id="IPR020606">
    <property type="entry name" value="Ribosomal_uS7_CS"/>
</dbReference>
<dbReference type="InterPro" id="IPR023798">
    <property type="entry name" value="Ribosomal_uS7_dom"/>
</dbReference>
<dbReference type="InterPro" id="IPR036823">
    <property type="entry name" value="Ribosomal_uS7_dom_sf"/>
</dbReference>
<dbReference type="NCBIfam" id="TIGR01029">
    <property type="entry name" value="rpsG_bact"/>
    <property type="match status" value="1"/>
</dbReference>
<dbReference type="PANTHER" id="PTHR11205">
    <property type="entry name" value="RIBOSOMAL PROTEIN S7"/>
    <property type="match status" value="1"/>
</dbReference>
<dbReference type="Pfam" id="PF00177">
    <property type="entry name" value="Ribosomal_S7"/>
    <property type="match status" value="1"/>
</dbReference>
<dbReference type="PIRSF" id="PIRSF002122">
    <property type="entry name" value="RPS7p_RPS7a_RPS5e_RPS7o"/>
    <property type="match status" value="1"/>
</dbReference>
<dbReference type="SUPFAM" id="SSF47973">
    <property type="entry name" value="Ribosomal protein S7"/>
    <property type="match status" value="1"/>
</dbReference>
<dbReference type="PROSITE" id="PS00052">
    <property type="entry name" value="RIBOSOMAL_S7"/>
    <property type="match status" value="1"/>
</dbReference>